<sequence>MALLNVLIYPDERLKTVAEPVSVFDEELQTFIDNMFETMYHEEGIGLAATQVNVHKRIITIDIEGTKENQIVLINPEILESFGETGIEEGCLSLPGLRGFVPRKETVKVKAQNRQGEDFMLDADGLLAICIQHEIDHLNGIVFADHLSPLKRQRMKEKLLKLQKQIAKNR</sequence>
<accession>Q0I181</accession>
<name>DEF_HISS1</name>
<comment type="function">
    <text evidence="1">Removes the formyl group from the N-terminal Met of newly synthesized proteins. Requires at least a dipeptide for an efficient rate of reaction. N-terminal L-methionine is a prerequisite for activity but the enzyme has broad specificity at other positions.</text>
</comment>
<comment type="catalytic activity">
    <reaction evidence="1">
        <text>N-terminal N-formyl-L-methionyl-[peptide] + H2O = N-terminal L-methionyl-[peptide] + formate</text>
        <dbReference type="Rhea" id="RHEA:24420"/>
        <dbReference type="Rhea" id="RHEA-COMP:10639"/>
        <dbReference type="Rhea" id="RHEA-COMP:10640"/>
        <dbReference type="ChEBI" id="CHEBI:15377"/>
        <dbReference type="ChEBI" id="CHEBI:15740"/>
        <dbReference type="ChEBI" id="CHEBI:49298"/>
        <dbReference type="ChEBI" id="CHEBI:64731"/>
        <dbReference type="EC" id="3.5.1.88"/>
    </reaction>
</comment>
<comment type="cofactor">
    <cofactor evidence="1">
        <name>Fe(2+)</name>
        <dbReference type="ChEBI" id="CHEBI:29033"/>
    </cofactor>
    <text evidence="1">Binds 1 Fe(2+) ion.</text>
</comment>
<comment type="similarity">
    <text evidence="1">Belongs to the polypeptide deformylase family.</text>
</comment>
<reference key="1">
    <citation type="journal article" date="2007" name="J. Bacteriol.">
        <title>Complete genome sequence of Haemophilus somnus (Histophilus somni) strain 129Pt and comparison to Haemophilus ducreyi 35000HP and Haemophilus influenzae Rd.</title>
        <authorList>
            <person name="Challacombe J.F."/>
            <person name="Duncan A.J."/>
            <person name="Brettin T.S."/>
            <person name="Bruce D."/>
            <person name="Chertkov O."/>
            <person name="Detter J.C."/>
            <person name="Han C.S."/>
            <person name="Misra M."/>
            <person name="Richardson P."/>
            <person name="Tapia R."/>
            <person name="Thayer N."/>
            <person name="Xie G."/>
            <person name="Inzana T.J."/>
        </authorList>
    </citation>
    <scope>NUCLEOTIDE SEQUENCE [LARGE SCALE GENOMIC DNA]</scope>
    <source>
        <strain>129Pt</strain>
    </source>
</reference>
<protein>
    <recommendedName>
        <fullName evidence="1">Peptide deformylase</fullName>
        <shortName evidence="1">PDF</shortName>
        <ecNumber evidence="1">3.5.1.88</ecNumber>
    </recommendedName>
    <alternativeName>
        <fullName evidence="1">Polypeptide deformylase</fullName>
    </alternativeName>
</protein>
<dbReference type="EC" id="3.5.1.88" evidence="1"/>
<dbReference type="EMBL" id="CP000436">
    <property type="protein sequence ID" value="ABI24322.1"/>
    <property type="molecule type" value="Genomic_DNA"/>
</dbReference>
<dbReference type="SMR" id="Q0I181"/>
<dbReference type="KEGG" id="hso:HS_0041"/>
<dbReference type="eggNOG" id="COG0242">
    <property type="taxonomic scope" value="Bacteria"/>
</dbReference>
<dbReference type="HOGENOM" id="CLU_061901_2_1_6"/>
<dbReference type="GO" id="GO:0046872">
    <property type="term" value="F:metal ion binding"/>
    <property type="evidence" value="ECO:0007669"/>
    <property type="project" value="UniProtKB-KW"/>
</dbReference>
<dbReference type="GO" id="GO:0042586">
    <property type="term" value="F:peptide deformylase activity"/>
    <property type="evidence" value="ECO:0007669"/>
    <property type="project" value="UniProtKB-UniRule"/>
</dbReference>
<dbReference type="GO" id="GO:0043686">
    <property type="term" value="P:co-translational protein modification"/>
    <property type="evidence" value="ECO:0007669"/>
    <property type="project" value="TreeGrafter"/>
</dbReference>
<dbReference type="GO" id="GO:0006412">
    <property type="term" value="P:translation"/>
    <property type="evidence" value="ECO:0007669"/>
    <property type="project" value="UniProtKB-UniRule"/>
</dbReference>
<dbReference type="CDD" id="cd00487">
    <property type="entry name" value="Pep_deformylase"/>
    <property type="match status" value="1"/>
</dbReference>
<dbReference type="FunFam" id="3.90.45.10:FF:000001">
    <property type="entry name" value="Peptide deformylase"/>
    <property type="match status" value="1"/>
</dbReference>
<dbReference type="Gene3D" id="3.90.45.10">
    <property type="entry name" value="Peptide deformylase"/>
    <property type="match status" value="1"/>
</dbReference>
<dbReference type="HAMAP" id="MF_00163">
    <property type="entry name" value="Pep_deformylase"/>
    <property type="match status" value="1"/>
</dbReference>
<dbReference type="InterPro" id="IPR023635">
    <property type="entry name" value="Peptide_deformylase"/>
</dbReference>
<dbReference type="InterPro" id="IPR036821">
    <property type="entry name" value="Peptide_deformylase_sf"/>
</dbReference>
<dbReference type="NCBIfam" id="TIGR00079">
    <property type="entry name" value="pept_deformyl"/>
    <property type="match status" value="1"/>
</dbReference>
<dbReference type="NCBIfam" id="NF001159">
    <property type="entry name" value="PRK00150.1-3"/>
    <property type="match status" value="1"/>
</dbReference>
<dbReference type="PANTHER" id="PTHR10458">
    <property type="entry name" value="PEPTIDE DEFORMYLASE"/>
    <property type="match status" value="1"/>
</dbReference>
<dbReference type="PANTHER" id="PTHR10458:SF21">
    <property type="entry name" value="PEPTIDE DEFORMYLASE"/>
    <property type="match status" value="1"/>
</dbReference>
<dbReference type="Pfam" id="PF01327">
    <property type="entry name" value="Pep_deformylase"/>
    <property type="match status" value="1"/>
</dbReference>
<dbReference type="PIRSF" id="PIRSF004749">
    <property type="entry name" value="Pep_def"/>
    <property type="match status" value="1"/>
</dbReference>
<dbReference type="PRINTS" id="PR01576">
    <property type="entry name" value="PDEFORMYLASE"/>
</dbReference>
<dbReference type="SUPFAM" id="SSF56420">
    <property type="entry name" value="Peptide deformylase"/>
    <property type="match status" value="1"/>
</dbReference>
<proteinExistence type="inferred from homology"/>
<evidence type="ECO:0000255" key="1">
    <source>
        <dbReference type="HAMAP-Rule" id="MF_00163"/>
    </source>
</evidence>
<keyword id="KW-0378">Hydrolase</keyword>
<keyword id="KW-0408">Iron</keyword>
<keyword id="KW-0479">Metal-binding</keyword>
<keyword id="KW-0648">Protein biosynthesis</keyword>
<feature type="chain" id="PRO_0000301036" description="Peptide deformylase">
    <location>
        <begin position="1"/>
        <end position="170"/>
    </location>
</feature>
<feature type="active site" evidence="1">
    <location>
        <position position="134"/>
    </location>
</feature>
<feature type="binding site" evidence="1">
    <location>
        <position position="91"/>
    </location>
    <ligand>
        <name>Fe cation</name>
        <dbReference type="ChEBI" id="CHEBI:24875"/>
    </ligand>
</feature>
<feature type="binding site" evidence="1">
    <location>
        <position position="133"/>
    </location>
    <ligand>
        <name>Fe cation</name>
        <dbReference type="ChEBI" id="CHEBI:24875"/>
    </ligand>
</feature>
<feature type="binding site" evidence="1">
    <location>
        <position position="137"/>
    </location>
    <ligand>
        <name>Fe cation</name>
        <dbReference type="ChEBI" id="CHEBI:24875"/>
    </ligand>
</feature>
<organism>
    <name type="scientific">Histophilus somni (strain 129Pt)</name>
    <name type="common">Haemophilus somnus</name>
    <dbReference type="NCBI Taxonomy" id="205914"/>
    <lineage>
        <taxon>Bacteria</taxon>
        <taxon>Pseudomonadati</taxon>
        <taxon>Pseudomonadota</taxon>
        <taxon>Gammaproteobacteria</taxon>
        <taxon>Pasteurellales</taxon>
        <taxon>Pasteurellaceae</taxon>
        <taxon>Histophilus</taxon>
    </lineage>
</organism>
<gene>
    <name evidence="1" type="primary">def</name>
    <name type="ordered locus">HS_0041</name>
</gene>